<comment type="function">
    <text evidence="1">May help in the organization of the PsaL subunit.</text>
</comment>
<comment type="subcellular location">
    <subcellularLocation>
        <location evidence="1">Plastid</location>
        <location evidence="1">Chloroplast thylakoid membrane</location>
        <topology evidence="1">Single-pass membrane protein</topology>
    </subcellularLocation>
</comment>
<comment type="similarity">
    <text evidence="3">Belongs to the PsaI family.</text>
</comment>
<gene>
    <name type="primary">psaI</name>
</gene>
<name>PSAI_GUITH</name>
<proteinExistence type="inferred from homology"/>
<evidence type="ECO:0000250" key="1"/>
<evidence type="ECO:0000255" key="2"/>
<evidence type="ECO:0000305" key="3"/>
<organism>
    <name type="scientific">Guillardia theta</name>
    <name type="common">Cryptophyte</name>
    <name type="synonym">Cryptomonas phi</name>
    <dbReference type="NCBI Taxonomy" id="55529"/>
    <lineage>
        <taxon>Eukaryota</taxon>
        <taxon>Cryptophyceae</taxon>
        <taxon>Pyrenomonadales</taxon>
        <taxon>Geminigeraceae</taxon>
        <taxon>Guillardia</taxon>
    </lineage>
</organism>
<protein>
    <recommendedName>
        <fullName>Photosystem I reaction center subunit VIII</fullName>
        <shortName>PSI-I</shortName>
    </recommendedName>
</protein>
<sequence length="36" mass="3986">MTAAYLPSILVPIIGIIFPGLTMAFAFIYIEQDQIN</sequence>
<feature type="chain" id="PRO_0000194654" description="Photosystem I reaction center subunit VIII">
    <location>
        <begin position="1"/>
        <end position="36"/>
    </location>
</feature>
<feature type="transmembrane region" description="Helical" evidence="2">
    <location>
        <begin position="10"/>
        <end position="30"/>
    </location>
</feature>
<dbReference type="EMBL" id="AF041468">
    <property type="protein sequence ID" value="AAC35653.1"/>
    <property type="molecule type" value="Genomic_DNA"/>
</dbReference>
<dbReference type="RefSeq" id="NP_050719.1">
    <property type="nucleotide sequence ID" value="NC_000926.1"/>
</dbReference>
<dbReference type="SMR" id="O78462"/>
<dbReference type="GeneID" id="857022"/>
<dbReference type="HOGENOM" id="CLU_215282_1_0_1"/>
<dbReference type="GO" id="GO:0009535">
    <property type="term" value="C:chloroplast thylakoid membrane"/>
    <property type="evidence" value="ECO:0007669"/>
    <property type="project" value="UniProtKB-SubCell"/>
</dbReference>
<dbReference type="GO" id="GO:0009522">
    <property type="term" value="C:photosystem I"/>
    <property type="evidence" value="ECO:0007669"/>
    <property type="project" value="UniProtKB-KW"/>
</dbReference>
<dbReference type="GO" id="GO:0015979">
    <property type="term" value="P:photosynthesis"/>
    <property type="evidence" value="ECO:0007669"/>
    <property type="project" value="UniProtKB-UniRule"/>
</dbReference>
<dbReference type="HAMAP" id="MF_00431">
    <property type="entry name" value="PSI_PsaI"/>
    <property type="match status" value="1"/>
</dbReference>
<dbReference type="InterPro" id="IPR001302">
    <property type="entry name" value="PSI_PsaI"/>
</dbReference>
<dbReference type="InterPro" id="IPR036357">
    <property type="entry name" value="PSI_PsaI_sf"/>
</dbReference>
<dbReference type="NCBIfam" id="TIGR03052">
    <property type="entry name" value="PS_I_psaI"/>
    <property type="match status" value="1"/>
</dbReference>
<dbReference type="Pfam" id="PF00796">
    <property type="entry name" value="PSI_8"/>
    <property type="match status" value="1"/>
</dbReference>
<dbReference type="SUPFAM" id="SSF81540">
    <property type="entry name" value="Subunit VIII of photosystem I reaction centre, PsaI"/>
    <property type="match status" value="1"/>
</dbReference>
<geneLocation type="chloroplast"/>
<keyword id="KW-0150">Chloroplast</keyword>
<keyword id="KW-0472">Membrane</keyword>
<keyword id="KW-0602">Photosynthesis</keyword>
<keyword id="KW-0603">Photosystem I</keyword>
<keyword id="KW-0934">Plastid</keyword>
<keyword id="KW-0793">Thylakoid</keyword>
<keyword id="KW-0812">Transmembrane</keyword>
<keyword id="KW-1133">Transmembrane helix</keyword>
<accession>O78462</accession>
<reference key="1">
    <citation type="journal article" date="1999" name="J. Mol. Evol.">
        <title>The plastid genome of the cryptophyte alga, Guillardia theta: complete sequence and conserved synteny groups confirm its common ancestry with red algae.</title>
        <authorList>
            <person name="Douglas S.E."/>
            <person name="Penny S.L."/>
        </authorList>
    </citation>
    <scope>NUCLEOTIDE SEQUENCE [LARGE SCALE GENOMIC DNA]</scope>
</reference>